<reference key="1">
    <citation type="journal article" date="1999" name="DNA Res.">
        <title>Complete structure of the chloroplast genome of Arabidopsis thaliana.</title>
        <authorList>
            <person name="Sato S."/>
            <person name="Nakamura Y."/>
            <person name="Kaneko T."/>
            <person name="Asamizu E."/>
            <person name="Tabata S."/>
        </authorList>
    </citation>
    <scope>NUCLEOTIDE SEQUENCE [LARGE SCALE GENOMIC DNA]</scope>
    <source>
        <strain>cv. Columbia</strain>
    </source>
</reference>
<evidence type="ECO:0000255" key="1">
    <source>
        <dbReference type="HAMAP-Rule" id="MF_00522"/>
    </source>
</evidence>
<evidence type="ECO:0007829" key="2">
    <source>
        <dbReference type="PDB" id="8J6Z"/>
    </source>
</evidence>
<accession>P56769</accession>
<dbReference type="EMBL" id="AP000423">
    <property type="protein sequence ID" value="BAA84405.1"/>
    <property type="molecule type" value="Genomic_DNA"/>
</dbReference>
<dbReference type="RefSeq" id="NP_051079.1">
    <property type="nucleotide sequence ID" value="NC_000932.1"/>
</dbReference>
<dbReference type="PDB" id="7WFD">
    <property type="method" value="EM"/>
    <property type="resolution" value="3.25 A"/>
    <property type="chains" value="AJ=1-44"/>
</dbReference>
<dbReference type="PDB" id="7WFE">
    <property type="method" value="EM"/>
    <property type="resolution" value="3.25 A"/>
    <property type="chains" value="BJ=1-44"/>
</dbReference>
<dbReference type="PDB" id="7WG5">
    <property type="method" value="EM"/>
    <property type="resolution" value="3.89 A"/>
    <property type="chains" value="AJ/BJ=1-44"/>
</dbReference>
<dbReference type="PDB" id="8J6Z">
    <property type="method" value="EM"/>
    <property type="resolution" value="2.79 A"/>
    <property type="chains" value="J=1-44"/>
</dbReference>
<dbReference type="PDB" id="8J7A">
    <property type="method" value="EM"/>
    <property type="resolution" value="3.06 A"/>
    <property type="chains" value="J=1-44"/>
</dbReference>
<dbReference type="PDB" id="8J7B">
    <property type="method" value="EM"/>
    <property type="resolution" value="3.22 A"/>
    <property type="chains" value="J=1-44"/>
</dbReference>
<dbReference type="PDBsum" id="7WFD"/>
<dbReference type="PDBsum" id="7WFE"/>
<dbReference type="PDBsum" id="7WG5"/>
<dbReference type="PDBsum" id="8J6Z"/>
<dbReference type="PDBsum" id="8J7A"/>
<dbReference type="PDBsum" id="8J7B"/>
<dbReference type="EMDB" id="EMD-32462"/>
<dbReference type="EMDB" id="EMD-32463"/>
<dbReference type="EMDB" id="EMD-32477"/>
<dbReference type="EMDB" id="EMD-36021"/>
<dbReference type="EMDB" id="EMD-36036"/>
<dbReference type="EMDB" id="EMD-36037"/>
<dbReference type="SMR" id="P56769"/>
<dbReference type="FunCoup" id="P56769">
    <property type="interactions" value="39"/>
</dbReference>
<dbReference type="STRING" id="3702.P56769"/>
<dbReference type="TCDB" id="5.B.4.1.1">
    <property type="family name" value="the plant photosystem i supercomplex (psi) family"/>
</dbReference>
<dbReference type="PaxDb" id="3702-ATCG00630.1"/>
<dbReference type="EnsemblPlants" id="ATCG00630.1">
    <property type="protein sequence ID" value="ATCG00630.1"/>
    <property type="gene ID" value="ATCG00630"/>
</dbReference>
<dbReference type="GeneID" id="844738"/>
<dbReference type="Gramene" id="ATCG00630.1">
    <property type="protein sequence ID" value="ATCG00630.1"/>
    <property type="gene ID" value="ATCG00630"/>
</dbReference>
<dbReference type="KEGG" id="ath:ArthCp042"/>
<dbReference type="Araport" id="ATCG00630"/>
<dbReference type="TAIR" id="ATCG00630">
    <property type="gene designation" value="PSAJ"/>
</dbReference>
<dbReference type="eggNOG" id="ENOG502S79R">
    <property type="taxonomic scope" value="Eukaryota"/>
</dbReference>
<dbReference type="HOGENOM" id="CLU_212133_1_1_1"/>
<dbReference type="InParanoid" id="P56769"/>
<dbReference type="PRO" id="PR:P56769"/>
<dbReference type="Proteomes" id="UP000006548">
    <property type="component" value="Chloroplast Pltd"/>
</dbReference>
<dbReference type="ExpressionAtlas" id="P56769">
    <property type="expression patterns" value="baseline and differential"/>
</dbReference>
<dbReference type="GO" id="GO:0009535">
    <property type="term" value="C:chloroplast thylakoid membrane"/>
    <property type="evidence" value="ECO:0007005"/>
    <property type="project" value="TAIR"/>
</dbReference>
<dbReference type="GO" id="GO:0009522">
    <property type="term" value="C:photosystem I"/>
    <property type="evidence" value="ECO:0007669"/>
    <property type="project" value="UniProtKB-KW"/>
</dbReference>
<dbReference type="GO" id="GO:0015979">
    <property type="term" value="P:photosynthesis"/>
    <property type="evidence" value="ECO:0007669"/>
    <property type="project" value="UniProtKB-UniRule"/>
</dbReference>
<dbReference type="FunFam" id="1.20.5.510:FF:000001">
    <property type="entry name" value="Photosystem I reaction center subunit IX"/>
    <property type="match status" value="1"/>
</dbReference>
<dbReference type="Gene3D" id="1.20.5.510">
    <property type="entry name" value="Single helix bin"/>
    <property type="match status" value="1"/>
</dbReference>
<dbReference type="HAMAP" id="MF_00522">
    <property type="entry name" value="PSI_PsaJ"/>
    <property type="match status" value="1"/>
</dbReference>
<dbReference type="InterPro" id="IPR002615">
    <property type="entry name" value="PSI_PsaJ"/>
</dbReference>
<dbReference type="InterPro" id="IPR036062">
    <property type="entry name" value="PSI_PsaJ_sf"/>
</dbReference>
<dbReference type="PANTHER" id="PTHR36082">
    <property type="match status" value="1"/>
</dbReference>
<dbReference type="PANTHER" id="PTHR36082:SF2">
    <property type="entry name" value="PHOTOSYSTEM I REACTION CENTER SUBUNIT IX"/>
    <property type="match status" value="1"/>
</dbReference>
<dbReference type="Pfam" id="PF01701">
    <property type="entry name" value="PSI_PsaJ"/>
    <property type="match status" value="1"/>
</dbReference>
<dbReference type="SUPFAM" id="SSF81544">
    <property type="entry name" value="Subunit IX of photosystem I reaction centre, PsaJ"/>
    <property type="match status" value="1"/>
</dbReference>
<sequence>MRDLKTYLSVAPVLSTLWFGSLAGLLIEINRLFPDALTFPFFSF</sequence>
<protein>
    <recommendedName>
        <fullName evidence="1">Photosystem I reaction center subunit IX</fullName>
    </recommendedName>
    <alternativeName>
        <fullName evidence="1">PSI-J</fullName>
    </alternativeName>
</protein>
<proteinExistence type="evidence at protein level"/>
<keyword id="KW-0002">3D-structure</keyword>
<keyword id="KW-0150">Chloroplast</keyword>
<keyword id="KW-0472">Membrane</keyword>
<keyword id="KW-0602">Photosynthesis</keyword>
<keyword id="KW-0603">Photosystem I</keyword>
<keyword id="KW-0934">Plastid</keyword>
<keyword id="KW-1185">Reference proteome</keyword>
<keyword id="KW-0793">Thylakoid</keyword>
<keyword id="KW-0812">Transmembrane</keyword>
<keyword id="KW-1133">Transmembrane helix</keyword>
<name>PSAJ_ARATH</name>
<comment type="function">
    <text evidence="1">May help in the organization of the PsaE and PsaF subunits.</text>
</comment>
<comment type="subcellular location">
    <subcellularLocation>
        <location evidence="1">Plastid</location>
        <location evidence="1">Chloroplast thylakoid membrane</location>
        <topology evidence="1">Single-pass membrane protein</topology>
    </subcellularLocation>
</comment>
<comment type="similarity">
    <text evidence="1">Belongs to the PsaJ family.</text>
</comment>
<gene>
    <name evidence="1" type="primary">psaJ</name>
    <name type="ordered locus">AtCg00630</name>
</gene>
<organism>
    <name type="scientific">Arabidopsis thaliana</name>
    <name type="common">Mouse-ear cress</name>
    <dbReference type="NCBI Taxonomy" id="3702"/>
    <lineage>
        <taxon>Eukaryota</taxon>
        <taxon>Viridiplantae</taxon>
        <taxon>Streptophyta</taxon>
        <taxon>Embryophyta</taxon>
        <taxon>Tracheophyta</taxon>
        <taxon>Spermatophyta</taxon>
        <taxon>Magnoliopsida</taxon>
        <taxon>eudicotyledons</taxon>
        <taxon>Gunneridae</taxon>
        <taxon>Pentapetalae</taxon>
        <taxon>rosids</taxon>
        <taxon>malvids</taxon>
        <taxon>Brassicales</taxon>
        <taxon>Brassicaceae</taxon>
        <taxon>Camelineae</taxon>
        <taxon>Arabidopsis</taxon>
    </lineage>
</organism>
<feature type="chain" id="PRO_0000207782" description="Photosystem I reaction center subunit IX">
    <location>
        <begin position="1"/>
        <end position="44"/>
    </location>
</feature>
<feature type="transmembrane region" description="Helical" evidence="1">
    <location>
        <begin position="7"/>
        <end position="27"/>
    </location>
</feature>
<feature type="helix" evidence="2">
    <location>
        <begin position="2"/>
        <end position="8"/>
    </location>
</feature>
<feature type="helix" evidence="2">
    <location>
        <begin position="11"/>
        <end position="32"/>
    </location>
</feature>
<geneLocation type="chloroplast"/>